<accession>Q9ASX5</accession>
<accession>Q9FHK3</accession>
<sequence>MAVSAFRGTRLPLFHHSQFPVARTVSGTSKKMIGARNFKGFVLTAQYSQTQDLFTSRLQSQIEKLPKLVEDIVQTSINTGPRGVTRLVQGVQAFVGVGGEWLNDLSKSTSASGGLPSELQLGLLSPLYLRKLFERMGATYIKLGQFIASAPTLFPPEYVKEFQNCFDKAPPVPFEEIRKILQEELGRPIESVYEYVDPTPIASASIAQVHGARLRGSQEDVVIKVLKPGIEDFLVADLNFIYVVSRIFEFLSPEFSRTSLVGIVKDIRESMLEEVDFNKEAQNIESFKRYLETMGLTGQATAPRVYKYCSSRRVLTMERLYGVPLTDLDSIRSLVSSPENSLITALNVWFGSLLACESFHADVHAGNLWLLRDGRIGFLDFGIVGRISPKTWAAMEVFLASIATEEYESMASALIQMGATNRDVDGKAFAKDLEKMFSSIQELDTEIVVATARGTNSDTTAVAANVVMDERQMNALFLDLVRVSESYGLKFPREFALLLKQLLYFDRYTRLLAPNLNMLQDQRISIASNKRTNGYKDSFN</sequence>
<name>Y5520_ARATH</name>
<gene>
    <name type="ordered locus">At5g05200</name>
    <name type="ORF">K2A11.7</name>
</gene>
<comment type="subcellular location">
    <subcellularLocation>
        <location evidence="3 4">Plastid</location>
        <location evidence="3 4">Chloroplast</location>
        <location evidence="3 4">Plastoglobule</location>
    </subcellularLocation>
</comment>
<comment type="similarity">
    <text evidence="5">Belongs to the protein kinase superfamily. ADCK protein kinase family.</text>
</comment>
<comment type="sequence caution" evidence="5">
    <conflict type="erroneous gene model prediction">
        <sequence resource="EMBL-CDS" id="BAB09696"/>
    </conflict>
</comment>
<evidence type="ECO:0000250" key="1"/>
<evidence type="ECO:0000255" key="2"/>
<evidence type="ECO:0000269" key="3">
    <source>
    </source>
</evidence>
<evidence type="ECO:0000269" key="4">
    <source>
    </source>
</evidence>
<evidence type="ECO:0000305" key="5"/>
<organism>
    <name type="scientific">Arabidopsis thaliana</name>
    <name type="common">Mouse-ear cress</name>
    <dbReference type="NCBI Taxonomy" id="3702"/>
    <lineage>
        <taxon>Eukaryota</taxon>
        <taxon>Viridiplantae</taxon>
        <taxon>Streptophyta</taxon>
        <taxon>Embryophyta</taxon>
        <taxon>Tracheophyta</taxon>
        <taxon>Spermatophyta</taxon>
        <taxon>Magnoliopsida</taxon>
        <taxon>eudicotyledons</taxon>
        <taxon>Gunneridae</taxon>
        <taxon>Pentapetalae</taxon>
        <taxon>rosids</taxon>
        <taxon>malvids</taxon>
        <taxon>Brassicales</taxon>
        <taxon>Brassicaceae</taxon>
        <taxon>Camelineae</taxon>
        <taxon>Arabidopsis</taxon>
    </lineage>
</organism>
<protein>
    <recommendedName>
        <fullName>Uncharacterized aarF domain-containing protein kinase At5g05200, chloroplastic</fullName>
        <ecNumber>2.7.-.-</ecNumber>
    </recommendedName>
</protein>
<reference key="1">
    <citation type="journal article" date="1999" name="DNA Res.">
        <title>Structural analysis of Arabidopsis thaliana chromosome 5. IX. Sequence features of the regions of 1,011,550 bp covered by seventeen P1 and TAC clones.</title>
        <authorList>
            <person name="Kaneko T."/>
            <person name="Katoh T."/>
            <person name="Sato S."/>
            <person name="Nakamura Y."/>
            <person name="Asamizu E."/>
            <person name="Kotani H."/>
            <person name="Miyajima N."/>
            <person name="Tabata S."/>
        </authorList>
    </citation>
    <scope>NUCLEOTIDE SEQUENCE [LARGE SCALE GENOMIC DNA]</scope>
    <source>
        <strain>cv. Columbia</strain>
    </source>
</reference>
<reference key="2">
    <citation type="journal article" date="2017" name="Plant J.">
        <title>Araport11: a complete reannotation of the Arabidopsis thaliana reference genome.</title>
        <authorList>
            <person name="Cheng C.Y."/>
            <person name="Krishnakumar V."/>
            <person name="Chan A.P."/>
            <person name="Thibaud-Nissen F."/>
            <person name="Schobel S."/>
            <person name="Town C.D."/>
        </authorList>
    </citation>
    <scope>GENOME REANNOTATION</scope>
    <source>
        <strain>cv. Columbia</strain>
    </source>
</reference>
<reference key="3">
    <citation type="journal article" date="2003" name="Science">
        <title>Empirical analysis of transcriptional activity in the Arabidopsis genome.</title>
        <authorList>
            <person name="Yamada K."/>
            <person name="Lim J."/>
            <person name="Dale J.M."/>
            <person name="Chen H."/>
            <person name="Shinn P."/>
            <person name="Palm C.J."/>
            <person name="Southwick A.M."/>
            <person name="Wu H.C."/>
            <person name="Kim C.J."/>
            <person name="Nguyen M."/>
            <person name="Pham P.K."/>
            <person name="Cheuk R.F."/>
            <person name="Karlin-Newmann G."/>
            <person name="Liu S.X."/>
            <person name="Lam B."/>
            <person name="Sakano H."/>
            <person name="Wu T."/>
            <person name="Yu G."/>
            <person name="Miranda M."/>
            <person name="Quach H.L."/>
            <person name="Tripp M."/>
            <person name="Chang C.H."/>
            <person name="Lee J.M."/>
            <person name="Toriumi M.J."/>
            <person name="Chan M.M."/>
            <person name="Tang C.C."/>
            <person name="Onodera C.S."/>
            <person name="Deng J.M."/>
            <person name="Akiyama K."/>
            <person name="Ansari Y."/>
            <person name="Arakawa T."/>
            <person name="Banh J."/>
            <person name="Banno F."/>
            <person name="Bowser L."/>
            <person name="Brooks S.Y."/>
            <person name="Carninci P."/>
            <person name="Chao Q."/>
            <person name="Choy N."/>
            <person name="Enju A."/>
            <person name="Goldsmith A.D."/>
            <person name="Gurjal M."/>
            <person name="Hansen N.F."/>
            <person name="Hayashizaki Y."/>
            <person name="Johnson-Hopson C."/>
            <person name="Hsuan V.W."/>
            <person name="Iida K."/>
            <person name="Karnes M."/>
            <person name="Khan S."/>
            <person name="Koesema E."/>
            <person name="Ishida J."/>
            <person name="Jiang P.X."/>
            <person name="Jones T."/>
            <person name="Kawai J."/>
            <person name="Kamiya A."/>
            <person name="Meyers C."/>
            <person name="Nakajima M."/>
            <person name="Narusaka M."/>
            <person name="Seki M."/>
            <person name="Sakurai T."/>
            <person name="Satou M."/>
            <person name="Tamse R."/>
            <person name="Vaysberg M."/>
            <person name="Wallender E.K."/>
            <person name="Wong C."/>
            <person name="Yamamura Y."/>
            <person name="Yuan S."/>
            <person name="Shinozaki K."/>
            <person name="Davis R.W."/>
            <person name="Theologis A."/>
            <person name="Ecker J.R."/>
        </authorList>
    </citation>
    <scope>NUCLEOTIDE SEQUENCE [LARGE SCALE MRNA]</scope>
    <source>
        <strain>cv. Columbia</strain>
    </source>
</reference>
<reference key="4">
    <citation type="journal article" date="2006" name="Plant Physiol.">
        <title>Protein profiling of plastoglobules in chloroplasts and chromoplasts. A surprising site for differential accumulation of metabolic enzymes.</title>
        <authorList>
            <person name="Ytterberg A.J."/>
            <person name="Peltier J.-B."/>
            <person name="van Wijk K.J."/>
        </authorList>
    </citation>
    <scope>IDENTIFICATION BY MASS SPECTROMETRY</scope>
    <scope>SUBCELLULAR LOCATION [LARGE SCALE ANALYSIS]</scope>
    <source>
        <strain>cv. Columbia</strain>
    </source>
</reference>
<reference key="5">
    <citation type="journal article" date="2012" name="Plant Physiol.">
        <title>The functional network of the Arabidopsis plastoglobule proteome based on quantitative proteomics and genome-wide coexpression analysis.</title>
        <authorList>
            <person name="Lundquist P.K."/>
            <person name="Poliakov A."/>
            <person name="Bhuiyan N.H."/>
            <person name="Zybailov B."/>
            <person name="Sun Q."/>
            <person name="van Wijk K.J."/>
        </authorList>
    </citation>
    <scope>IDENTIFICATION BY MASS SPECTROMETRY</scope>
    <scope>SUBCELLULAR LOCATION [LARGE SCALE ANALYSIS]</scope>
    <source>
        <strain>cv. Columbia</strain>
    </source>
</reference>
<proteinExistence type="evidence at protein level"/>
<dbReference type="EC" id="2.7.-.-"/>
<dbReference type="EMBL" id="AB018111">
    <property type="protein sequence ID" value="BAB09696.1"/>
    <property type="status" value="ALT_SEQ"/>
    <property type="molecule type" value="Genomic_DNA"/>
</dbReference>
<dbReference type="EMBL" id="CP002688">
    <property type="protein sequence ID" value="AED90840.1"/>
    <property type="molecule type" value="Genomic_DNA"/>
</dbReference>
<dbReference type="EMBL" id="AF361613">
    <property type="protein sequence ID" value="AAK32781.1"/>
    <property type="molecule type" value="mRNA"/>
</dbReference>
<dbReference type="EMBL" id="AY133554">
    <property type="protein sequence ID" value="AAM91384.1"/>
    <property type="molecule type" value="mRNA"/>
</dbReference>
<dbReference type="EMBL" id="AY063020">
    <property type="protein sequence ID" value="AAL34194.1"/>
    <property type="molecule type" value="mRNA"/>
</dbReference>
<dbReference type="EMBL" id="AY093317">
    <property type="protein sequence ID" value="AAM13316.1"/>
    <property type="molecule type" value="mRNA"/>
</dbReference>
<dbReference type="EMBL" id="AY035149">
    <property type="protein sequence ID" value="AAK59653.1"/>
    <property type="molecule type" value="mRNA"/>
</dbReference>
<dbReference type="EMBL" id="AY059866">
    <property type="protein sequence ID" value="AAL24348.1"/>
    <property type="molecule type" value="mRNA"/>
</dbReference>
<dbReference type="RefSeq" id="NP_568150.1">
    <property type="nucleotide sequence ID" value="NM_120602.5"/>
</dbReference>
<dbReference type="SMR" id="Q9ASX5"/>
<dbReference type="BioGRID" id="15681">
    <property type="interactions" value="1"/>
</dbReference>
<dbReference type="FunCoup" id="Q9ASX5">
    <property type="interactions" value="835"/>
</dbReference>
<dbReference type="STRING" id="3702.Q9ASX5"/>
<dbReference type="GlyGen" id="Q9ASX5">
    <property type="glycosylation" value="1 site"/>
</dbReference>
<dbReference type="iPTMnet" id="Q9ASX5"/>
<dbReference type="PaxDb" id="3702-AT5G05200.1"/>
<dbReference type="ProteomicsDB" id="242832"/>
<dbReference type="EnsemblPlants" id="AT5G05200.1">
    <property type="protein sequence ID" value="AT5G05200.1"/>
    <property type="gene ID" value="AT5G05200"/>
</dbReference>
<dbReference type="GeneID" id="830402"/>
<dbReference type="Gramene" id="AT5G05200.1">
    <property type="protein sequence ID" value="AT5G05200.1"/>
    <property type="gene ID" value="AT5G05200"/>
</dbReference>
<dbReference type="KEGG" id="ath:AT5G05200"/>
<dbReference type="Araport" id="AT5G05200"/>
<dbReference type="TAIR" id="AT5G05200"/>
<dbReference type="eggNOG" id="KOG1235">
    <property type="taxonomic scope" value="Eukaryota"/>
</dbReference>
<dbReference type="HOGENOM" id="CLU_006533_0_1_1"/>
<dbReference type="InParanoid" id="Q9ASX5"/>
<dbReference type="OMA" id="GCESFHA"/>
<dbReference type="OrthoDB" id="427480at2759"/>
<dbReference type="PhylomeDB" id="Q9ASX5"/>
<dbReference type="PRO" id="PR:Q9ASX5"/>
<dbReference type="Proteomes" id="UP000006548">
    <property type="component" value="Chromosome 5"/>
</dbReference>
<dbReference type="ExpressionAtlas" id="Q9ASX5">
    <property type="expression patterns" value="baseline and differential"/>
</dbReference>
<dbReference type="GO" id="GO:0009507">
    <property type="term" value="C:chloroplast"/>
    <property type="evidence" value="ECO:0007005"/>
    <property type="project" value="TAIR"/>
</dbReference>
<dbReference type="GO" id="GO:0005886">
    <property type="term" value="C:plasma membrane"/>
    <property type="evidence" value="ECO:0007005"/>
    <property type="project" value="TAIR"/>
</dbReference>
<dbReference type="GO" id="GO:0010287">
    <property type="term" value="C:plastoglobule"/>
    <property type="evidence" value="ECO:0007005"/>
    <property type="project" value="TAIR"/>
</dbReference>
<dbReference type="GO" id="GO:0005524">
    <property type="term" value="F:ATP binding"/>
    <property type="evidence" value="ECO:0007669"/>
    <property type="project" value="UniProtKB-KW"/>
</dbReference>
<dbReference type="GO" id="GO:0016301">
    <property type="term" value="F:kinase activity"/>
    <property type="evidence" value="ECO:0007669"/>
    <property type="project" value="UniProtKB-KW"/>
</dbReference>
<dbReference type="CDD" id="cd05121">
    <property type="entry name" value="ABC1_ADCK3-like"/>
    <property type="match status" value="1"/>
</dbReference>
<dbReference type="InterPro" id="IPR004147">
    <property type="entry name" value="ABC1_dom"/>
</dbReference>
<dbReference type="InterPro" id="IPR011009">
    <property type="entry name" value="Kinase-like_dom_sf"/>
</dbReference>
<dbReference type="InterPro" id="IPR051130">
    <property type="entry name" value="Mito_struct-func_regulator"/>
</dbReference>
<dbReference type="PANTHER" id="PTHR43173">
    <property type="entry name" value="ABC1 FAMILY PROTEIN"/>
    <property type="match status" value="1"/>
</dbReference>
<dbReference type="PANTHER" id="PTHR43173:SF22">
    <property type="entry name" value="OS07G0227800 PROTEIN"/>
    <property type="match status" value="1"/>
</dbReference>
<dbReference type="Pfam" id="PF03109">
    <property type="entry name" value="ABC1"/>
    <property type="match status" value="1"/>
</dbReference>
<dbReference type="SUPFAM" id="SSF56112">
    <property type="entry name" value="Protein kinase-like (PK-like)"/>
    <property type="match status" value="1"/>
</dbReference>
<feature type="transit peptide" description="Chloroplast" evidence="2">
    <location>
        <begin position="1"/>
        <end position="58"/>
    </location>
</feature>
<feature type="chain" id="PRO_0000286525" description="Uncharacterized aarF domain-containing protein kinase At5g05200, chloroplastic">
    <location>
        <begin position="59"/>
        <end position="540"/>
    </location>
</feature>
<feature type="domain" description="Protein kinase">
    <location>
        <begin position="195"/>
        <end position="533"/>
    </location>
</feature>
<feature type="active site" description="Proton acceptor" evidence="1">
    <location>
        <position position="362"/>
    </location>
</feature>
<feature type="binding site" evidence="1">
    <location>
        <begin position="201"/>
        <end position="209"/>
    </location>
    <ligand>
        <name>ATP</name>
        <dbReference type="ChEBI" id="CHEBI:30616"/>
    </ligand>
</feature>
<feature type="binding site" evidence="1">
    <location>
        <position position="224"/>
    </location>
    <ligand>
        <name>ATP</name>
        <dbReference type="ChEBI" id="CHEBI:30616"/>
    </ligand>
</feature>
<keyword id="KW-0067">ATP-binding</keyword>
<keyword id="KW-0150">Chloroplast</keyword>
<keyword id="KW-0418">Kinase</keyword>
<keyword id="KW-0547">Nucleotide-binding</keyword>
<keyword id="KW-0934">Plastid</keyword>
<keyword id="KW-1185">Reference proteome</keyword>
<keyword id="KW-0808">Transferase</keyword>
<keyword id="KW-0809">Transit peptide</keyword>